<proteinExistence type="evidence at transcript level"/>
<reference key="1">
    <citation type="submission" date="2004-06" db="EMBL/GenBank/DDBJ databases">
        <authorList>
            <consortium name="NIH - Xenopus Gene Collection (XGC) project"/>
        </authorList>
    </citation>
    <scope>NUCLEOTIDE SEQUENCE [LARGE SCALE MRNA]</scope>
    <source>
        <tissue>Embryo</tissue>
    </source>
</reference>
<sequence length="438" mass="48712">MASLRLSVLLVSVSWLLLLVSGLRAGPRTLVLMENINLRETHSLFFRSLSDRGFDLSFKTADDPSLSLIKYGEFLYDNLIIFSPSVEDFGGNINIETISSFIDGGGSVLVAASSDIGDPLRELGSECGIEFDEEKTAVIDHHNYDISDPGQHTLIVADSENLLKAPTIVGKTPLNPILFRGVGMVADPDNPLVLDILTGSSTSYSFFPDKPITQYPHAVGKNTLLIAGLQARNNARVVFSGSLDFFSDSFFNSAVQKAASGSNRYAKTGNYELAMALSRWVFKEEGVLRVGEVSHHRVGESSPPSAYTVTDLVEYSIVIEKLSDGKWVPFDGDDIQLEFVRIDPFVRTFLKKNGGKYSVQFKLPDVYGVFQFKVDYNRLGYTHLYSTTQISVRPLQHTQYERFIPSAYPYYASAFSVMFGLFIFSIVFLHMKEKEKSD</sequence>
<name>OST48_XENLA</name>
<accession>Q6GNR9</accession>
<comment type="function">
    <text evidence="2 3">Subunit of the oligosaccharyl transferase (OST) complex that catalyzes the initial transfer of a defined glycan (Glc(3)Man(9)GlcNAc(2) in eukaryotes) from the lipid carrier dolichol-pyrophosphate to an asparagine residue within an Asn-X-Ser/Thr consensus motif in nascent polypeptide chains, the first step in protein N-glycosylation (By similarity). N-glycosylation occurs cotranslationally and the complex associates with the Sec61 complex at the channel-forming translocon complex that mediates protein translocation across the endoplasmic reticulum (ER). All subunits are required for a maximal enzyme activity (By similarity). Required for the assembly of both SST3A- and SS3B-containing OST complexes (By similarity).</text>
</comment>
<comment type="pathway">
    <text evidence="2">Protein modification; protein glycosylation.</text>
</comment>
<comment type="subunit">
    <text evidence="3">Component of the oligosaccharyltransferase (OST) complex.</text>
</comment>
<comment type="subcellular location">
    <subcellularLocation>
        <location evidence="1">Endoplasmic reticulum membrane</location>
        <topology evidence="1">Single-pass type I membrane protein</topology>
    </subcellularLocation>
</comment>
<comment type="similarity">
    <text evidence="5">Belongs to the DDOST 48 kDa subunit family.</text>
</comment>
<dbReference type="EMBL" id="BC073434">
    <property type="protein sequence ID" value="AAH73434.1"/>
    <property type="molecule type" value="mRNA"/>
</dbReference>
<dbReference type="RefSeq" id="NP_001085856.1">
    <property type="nucleotide sequence ID" value="NM_001092387.1"/>
</dbReference>
<dbReference type="SMR" id="Q6GNR9"/>
<dbReference type="BioGRID" id="102446">
    <property type="interactions" value="1"/>
</dbReference>
<dbReference type="DNASU" id="444283"/>
<dbReference type="GeneID" id="444283"/>
<dbReference type="KEGG" id="xla:444283"/>
<dbReference type="AGR" id="Xenbase:XB-GENE-5785164"/>
<dbReference type="CTD" id="444283"/>
<dbReference type="Xenbase" id="XB-GENE-5785164">
    <property type="gene designation" value="ddost.S"/>
</dbReference>
<dbReference type="OrthoDB" id="29105at2759"/>
<dbReference type="UniPathway" id="UPA00378"/>
<dbReference type="Proteomes" id="UP000186698">
    <property type="component" value="Chromosome 7S"/>
</dbReference>
<dbReference type="Bgee" id="444283">
    <property type="expression patterns" value="Expressed in liver and 19 other cell types or tissues"/>
</dbReference>
<dbReference type="GO" id="GO:0008250">
    <property type="term" value="C:oligosaccharyltransferase complex"/>
    <property type="evidence" value="ECO:0000250"/>
    <property type="project" value="UniProtKB"/>
</dbReference>
<dbReference type="GO" id="GO:0006486">
    <property type="term" value="P:protein glycosylation"/>
    <property type="evidence" value="ECO:0000250"/>
    <property type="project" value="UniProtKB"/>
</dbReference>
<dbReference type="GO" id="GO:0018279">
    <property type="term" value="P:protein N-linked glycosylation via asparagine"/>
    <property type="evidence" value="ECO:0000318"/>
    <property type="project" value="GO_Central"/>
</dbReference>
<dbReference type="InterPro" id="IPR005013">
    <property type="entry name" value="DDOST_48_kDa_subunit"/>
</dbReference>
<dbReference type="InterPro" id="IPR055459">
    <property type="entry name" value="OST48_MD"/>
</dbReference>
<dbReference type="InterPro" id="IPR055457">
    <property type="entry name" value="OST48_N"/>
</dbReference>
<dbReference type="PANTHER" id="PTHR10830">
    <property type="entry name" value="DOLICHYL-DIPHOSPHOOLIGOSACCHARIDE--PROTEIN GLYCOSYLTRANSFERASE 48 KDA SUBUNIT"/>
    <property type="match status" value="1"/>
</dbReference>
<dbReference type="PANTHER" id="PTHR10830:SF0">
    <property type="entry name" value="DOLICHYL-DIPHOSPHOOLIGOSACCHARIDE--PROTEIN GLYCOSYLTRANSFERASE 48 KDA SUBUNIT"/>
    <property type="match status" value="1"/>
</dbReference>
<dbReference type="Pfam" id="PF23358">
    <property type="entry name" value="OST48_MD"/>
    <property type="match status" value="1"/>
</dbReference>
<dbReference type="Pfam" id="PF03345">
    <property type="entry name" value="OST48_N"/>
    <property type="match status" value="1"/>
</dbReference>
<keyword id="KW-0256">Endoplasmic reticulum</keyword>
<keyword id="KW-0472">Membrane</keyword>
<keyword id="KW-1185">Reference proteome</keyword>
<keyword id="KW-0732">Signal</keyword>
<keyword id="KW-0812">Transmembrane</keyword>
<keyword id="KW-1133">Transmembrane helix</keyword>
<protein>
    <recommendedName>
        <fullName evidence="2">Dolichyl-diphosphooligosaccharide--protein glycosyltransferase 48 kDa subunit</fullName>
        <shortName>DDOST 48 kDa subunit</shortName>
        <shortName>Oligosaccharyl transferase 48 kDa subunit</shortName>
    </recommendedName>
</protein>
<evidence type="ECO:0000250" key="1"/>
<evidence type="ECO:0000250" key="2">
    <source>
        <dbReference type="UniProtKB" id="P39656"/>
    </source>
</evidence>
<evidence type="ECO:0000250" key="3">
    <source>
        <dbReference type="UniProtKB" id="Q05052"/>
    </source>
</evidence>
<evidence type="ECO:0000255" key="4"/>
<evidence type="ECO:0000305" key="5"/>
<feature type="signal peptide" evidence="4">
    <location>
        <begin position="1"/>
        <end position="25"/>
    </location>
</feature>
<feature type="chain" id="PRO_0000357449" description="Dolichyl-diphosphooligosaccharide--protein glycosyltransferase 48 kDa subunit">
    <location>
        <begin position="26"/>
        <end position="438"/>
    </location>
</feature>
<feature type="topological domain" description="Lumenal" evidence="4">
    <location>
        <begin position="26"/>
        <end position="408"/>
    </location>
</feature>
<feature type="transmembrane region" description="Helical" evidence="4">
    <location>
        <begin position="409"/>
        <end position="429"/>
    </location>
</feature>
<feature type="topological domain" description="Cytoplasmic" evidence="4">
    <location>
        <begin position="430"/>
        <end position="438"/>
    </location>
</feature>
<organism>
    <name type="scientific">Xenopus laevis</name>
    <name type="common">African clawed frog</name>
    <dbReference type="NCBI Taxonomy" id="8355"/>
    <lineage>
        <taxon>Eukaryota</taxon>
        <taxon>Metazoa</taxon>
        <taxon>Chordata</taxon>
        <taxon>Craniata</taxon>
        <taxon>Vertebrata</taxon>
        <taxon>Euteleostomi</taxon>
        <taxon>Amphibia</taxon>
        <taxon>Batrachia</taxon>
        <taxon>Anura</taxon>
        <taxon>Pipoidea</taxon>
        <taxon>Pipidae</taxon>
        <taxon>Xenopodinae</taxon>
        <taxon>Xenopus</taxon>
        <taxon>Xenopus</taxon>
    </lineage>
</organism>
<gene>
    <name evidence="2" type="primary">ddost</name>
</gene>